<name>PRVA_CALMI</name>
<feature type="chain" id="PRO_0000462446" description="Parvalbumin alpha">
    <location>
        <begin position="1"/>
        <end position="110"/>
    </location>
</feature>
<feature type="domain" description="EF-hand 1" evidence="2">
    <location>
        <begin position="39"/>
        <end position="74"/>
    </location>
</feature>
<feature type="domain" description="EF-hand 2" evidence="2">
    <location>
        <begin position="78"/>
        <end position="110"/>
    </location>
</feature>
<feature type="binding site" evidence="2">
    <location>
        <position position="52"/>
    </location>
    <ligand>
        <name>Ca(2+)</name>
        <dbReference type="ChEBI" id="CHEBI:29108"/>
        <label>1</label>
    </ligand>
</feature>
<feature type="binding site" evidence="2">
    <location>
        <position position="54"/>
    </location>
    <ligand>
        <name>Ca(2+)</name>
        <dbReference type="ChEBI" id="CHEBI:29108"/>
        <label>1</label>
    </ligand>
</feature>
<feature type="binding site" evidence="2">
    <location>
        <position position="56"/>
    </location>
    <ligand>
        <name>Ca(2+)</name>
        <dbReference type="ChEBI" id="CHEBI:29108"/>
        <label>1</label>
    </ligand>
</feature>
<feature type="binding site" evidence="1">
    <location>
        <position position="58"/>
    </location>
    <ligand>
        <name>Ca(2+)</name>
        <dbReference type="ChEBI" id="CHEBI:29108"/>
        <label>1</label>
    </ligand>
</feature>
<feature type="binding site" evidence="1">
    <location>
        <position position="60"/>
    </location>
    <ligand>
        <name>Ca(2+)</name>
        <dbReference type="ChEBI" id="CHEBI:29108"/>
        <label>1</label>
    </ligand>
</feature>
<feature type="binding site" evidence="2">
    <location>
        <position position="63"/>
    </location>
    <ligand>
        <name>Ca(2+)</name>
        <dbReference type="ChEBI" id="CHEBI:29108"/>
        <label>1</label>
    </ligand>
</feature>
<feature type="binding site" evidence="2">
    <location>
        <position position="91"/>
    </location>
    <ligand>
        <name>Ca(2+)</name>
        <dbReference type="ChEBI" id="CHEBI:29108"/>
        <label>2</label>
    </ligand>
</feature>
<feature type="binding site" evidence="2">
    <location>
        <position position="93"/>
    </location>
    <ligand>
        <name>Ca(2+)</name>
        <dbReference type="ChEBI" id="CHEBI:29108"/>
        <label>2</label>
    </ligand>
</feature>
<feature type="binding site" evidence="2">
    <location>
        <position position="95"/>
    </location>
    <ligand>
        <name>Ca(2+)</name>
        <dbReference type="ChEBI" id="CHEBI:29108"/>
        <label>2</label>
    </ligand>
</feature>
<feature type="binding site" evidence="2">
    <location>
        <position position="97"/>
    </location>
    <ligand>
        <name>Ca(2+)</name>
        <dbReference type="ChEBI" id="CHEBI:29108"/>
        <label>2</label>
    </ligand>
</feature>
<feature type="binding site" evidence="2">
    <location>
        <position position="102"/>
    </location>
    <ligand>
        <name>Ca(2+)</name>
        <dbReference type="ChEBI" id="CHEBI:29108"/>
        <label>2</label>
    </ligand>
</feature>
<keyword id="KW-0020">Allergen</keyword>
<keyword id="KW-0106">Calcium</keyword>
<keyword id="KW-0479">Metal-binding</keyword>
<keyword id="KW-0514">Muscle protein</keyword>
<keyword id="KW-1185">Reference proteome</keyword>
<keyword id="KW-0677">Repeat</keyword>
<evidence type="ECO:0000250" key="1">
    <source>
        <dbReference type="UniProtKB" id="P02625"/>
    </source>
</evidence>
<evidence type="ECO:0000255" key="2">
    <source>
        <dbReference type="PROSITE-ProRule" id="PRU00448"/>
    </source>
</evidence>
<evidence type="ECO:0000255" key="3">
    <source>
        <dbReference type="RuleBase" id="RU368048"/>
    </source>
</evidence>
<evidence type="ECO:0000269" key="4">
    <source>
    </source>
</evidence>
<evidence type="ECO:0000303" key="5">
    <source>
    </source>
</evidence>
<evidence type="ECO:0000305" key="6"/>
<evidence type="ECO:0000312" key="7">
    <source>
        <dbReference type="EMBL" id="AFP11872.1"/>
    </source>
</evidence>
<comment type="function">
    <text evidence="3">In muscle, parvalbumin is thought to be involved in relaxation after contraction. It binds two calcium ions.</text>
</comment>
<comment type="biophysicochemical properties">
    <temperatureDependence>
        <text evidence="4">Thermostable between pH 4.0-9.5. Average melting temperature (Tm) across all pH values is 71 degrees Celsius. Lower melting temperature in acidic pH 4.0-5.0.</text>
    </temperatureDependence>
</comment>
<comment type="allergen">
    <text evidence="4">Causes an allergic reaction in human (PubMed:39584689). Recombinant protein binds to IgE in 78% of the 9 fish-allergic Polish patients tested likely due to cross-reactivity of the parvalbumins (PubMed:39584689). Does not cross-react with Cyp c 1.0101 allergen from common carp (PubMed:39584689). Loss of IgE-binding in the presence of approximately 0.1 mM calcium-chelating EDTA.</text>
</comment>
<comment type="similarity">
    <text evidence="3">Belongs to the parvalbumin family.</text>
</comment>
<organism evidence="7">
    <name type="scientific">Callorhinchus milii</name>
    <name type="common">Ghost shark</name>
    <dbReference type="NCBI Taxonomy" id="7868"/>
    <lineage>
        <taxon>Eukaryota</taxon>
        <taxon>Metazoa</taxon>
        <taxon>Chordata</taxon>
        <taxon>Craniata</taxon>
        <taxon>Vertebrata</taxon>
        <taxon>Chondrichthyes</taxon>
        <taxon>Holocephali</taxon>
        <taxon>Chimaeriformes</taxon>
        <taxon>Callorhinchidae</taxon>
        <taxon>Callorhinchus</taxon>
    </lineage>
</organism>
<proteinExistence type="evidence at protein level"/>
<reference evidence="7" key="1">
    <citation type="journal article" date="2014" name="Nature">
        <title>Elephant shark genome provides unique insights into gnathostome evolution.</title>
        <authorList>
            <consortium name="International Elephant Shark Genome Sequencing Consortium"/>
            <person name="Venkatesh B."/>
            <person name="Lee A.P."/>
            <person name="Ravi V."/>
            <person name="Maurya A.K."/>
            <person name="Lian M.M."/>
            <person name="Swann J.B."/>
            <person name="Ohta Y."/>
            <person name="Flajnik M.F."/>
            <person name="Sutoh Y."/>
            <person name="Kasahara M."/>
            <person name="Hoon S."/>
            <person name="Gangu V."/>
            <person name="Roy S.W."/>
            <person name="Irimia M."/>
            <person name="Korzh V."/>
            <person name="Kondrychyn I."/>
            <person name="Lim Z.W."/>
            <person name="Tay B.H."/>
            <person name="Tohari S."/>
            <person name="Kong K.W."/>
            <person name="Ho S."/>
            <person name="Lorente-Galdos B."/>
            <person name="Quilez J."/>
            <person name="Marques-Bonet T."/>
            <person name="Raney B.J."/>
            <person name="Ingham P.W."/>
            <person name="Tay A."/>
            <person name="Hillier L.W."/>
            <person name="Minx P."/>
            <person name="Boehm T."/>
            <person name="Wilson R.K."/>
            <person name="Brenner S."/>
            <person name="Warren W.C."/>
        </authorList>
    </citation>
    <scope>NUCLEOTIDE SEQUENCE [MRNA]</scope>
    <source>
        <tissue evidence="7">Muscle</tissue>
    </source>
</reference>
<reference key="2">
    <citation type="journal article" date="2024" name="Protein Sci.">
        <title>Comparative studies of seafood and reptile alpha- and beta-parvalbumins.</title>
        <authorList>
            <person name="O'Malley A."/>
            <person name="Ray J.M."/>
            <person name="Kitlas P."/>
            <person name="Ruethers T."/>
            <person name="Kapingidza A.B."/>
            <person name="Cierpicki T."/>
            <person name="Lopata A."/>
            <person name="Kowal K."/>
            <person name="Chruszcz M."/>
        </authorList>
    </citation>
    <scope>BIOPHYSICOCHEMICAL PROPERTIES</scope>
    <scope>ALLERGEN</scope>
</reference>
<sequence length="110" mass="12131">MSINKILSAADITKALGEFKGADSFDHKKFFHMIGLKKKNAKDVEAVFYILDKDKSGFIEEDELKSVLKCFAPEGRDLSEKETKDLLTAGDEDGDGKIGVSEFIQLVANS</sequence>
<protein>
    <recommendedName>
        <fullName evidence="6">Parvalbumin alpha</fullName>
    </recommendedName>
    <alternativeName>
        <fullName evidence="5">Alpha-parvalbumin</fullName>
        <shortName evidence="5">Alpha-PV</shortName>
    </alternativeName>
</protein>
<dbReference type="EMBL" id="JW879355">
    <property type="protein sequence ID" value="AFP11872.1"/>
    <property type="molecule type" value="mRNA"/>
</dbReference>
<dbReference type="Proteomes" id="UP000314986">
    <property type="component" value="Unplaced"/>
</dbReference>
<dbReference type="GO" id="GO:0005737">
    <property type="term" value="C:cytoplasm"/>
    <property type="evidence" value="ECO:0007669"/>
    <property type="project" value="TreeGrafter"/>
</dbReference>
<dbReference type="GO" id="GO:0005509">
    <property type="term" value="F:calcium ion binding"/>
    <property type="evidence" value="ECO:0007669"/>
    <property type="project" value="UniProtKB-UniRule"/>
</dbReference>
<dbReference type="FunFam" id="1.10.238.10:FF:000060">
    <property type="entry name" value="Parvalbumin, thymic"/>
    <property type="match status" value="1"/>
</dbReference>
<dbReference type="Gene3D" id="1.10.238.10">
    <property type="entry name" value="EF-hand"/>
    <property type="match status" value="1"/>
</dbReference>
<dbReference type="InterPro" id="IPR011992">
    <property type="entry name" value="EF-hand-dom_pair"/>
</dbReference>
<dbReference type="InterPro" id="IPR018247">
    <property type="entry name" value="EF_Hand_1_Ca_BS"/>
</dbReference>
<dbReference type="InterPro" id="IPR002048">
    <property type="entry name" value="EF_hand_dom"/>
</dbReference>
<dbReference type="InterPro" id="IPR008080">
    <property type="entry name" value="Parvalbumin"/>
</dbReference>
<dbReference type="PANTHER" id="PTHR11653">
    <property type="entry name" value="PARVALBUMIN ALPHA"/>
    <property type="match status" value="1"/>
</dbReference>
<dbReference type="PANTHER" id="PTHR11653:SF2">
    <property type="entry name" value="PARVALBUMIN ALPHA"/>
    <property type="match status" value="1"/>
</dbReference>
<dbReference type="Pfam" id="PF13499">
    <property type="entry name" value="EF-hand_7"/>
    <property type="match status" value="1"/>
</dbReference>
<dbReference type="PRINTS" id="PR01697">
    <property type="entry name" value="PARVALBUMIN"/>
</dbReference>
<dbReference type="SMART" id="SM00054">
    <property type="entry name" value="EFh"/>
    <property type="match status" value="2"/>
</dbReference>
<dbReference type="SUPFAM" id="SSF47473">
    <property type="entry name" value="EF-hand"/>
    <property type="match status" value="1"/>
</dbReference>
<dbReference type="PROSITE" id="PS00018">
    <property type="entry name" value="EF_HAND_1"/>
    <property type="match status" value="2"/>
</dbReference>
<dbReference type="PROSITE" id="PS50222">
    <property type="entry name" value="EF_HAND_2"/>
    <property type="match status" value="2"/>
</dbReference>
<accession>V9LFM0</accession>